<dbReference type="EMBL" id="AM867690">
    <property type="status" value="NOT_ANNOTATED_CDS"/>
    <property type="molecule type" value="mRNA"/>
</dbReference>
<dbReference type="HOGENOM" id="CLU_1379333_0_0_1"/>
<dbReference type="InParanoid" id="P86787"/>
<dbReference type="Proteomes" id="UP000005408">
    <property type="component" value="Unplaced"/>
</dbReference>
<reference evidence="3" key="1">
    <citation type="journal article" date="2008" name="Gene">
        <title>Increasing genomic information in bivalves through new EST collections in four species: development of new genetic markers for environmental studies and genome evolution.</title>
        <authorList>
            <person name="Tanguy A."/>
            <person name="Bierne N."/>
            <person name="Saavedra C."/>
            <person name="Pina B."/>
            <person name="Bachere E."/>
            <person name="Kube M."/>
            <person name="Bazin E."/>
            <person name="Bonhomme F."/>
            <person name="Boudry P."/>
            <person name="Boulo V."/>
            <person name="Boutet I."/>
            <person name="Cancela L."/>
            <person name="Dossat C."/>
            <person name="Favrel P."/>
            <person name="Huvet A."/>
            <person name="Jarque S."/>
            <person name="Jollivet D."/>
            <person name="Klages S."/>
            <person name="Lapegue S."/>
            <person name="Leite R."/>
            <person name="Moal J."/>
            <person name="Moraga D."/>
            <person name="Reinhardt R."/>
            <person name="Samain J.F."/>
            <person name="Zouros E."/>
            <person name="Canario A."/>
        </authorList>
    </citation>
    <scope>NUCLEOTIDE SEQUENCE [MRNA]</scope>
</reference>
<reference evidence="3" key="2">
    <citation type="journal article" date="2010" name="FEBS Lett.">
        <title>Proteomic identification of novel proteins from the calcifying shell matrix of the Pacific oyster Crassostrea gigas.</title>
        <authorList>
            <person name="Marie B."/>
            <person name="Zanella-Cleon I."/>
            <person name="Becchi M."/>
            <person name="Marin F."/>
        </authorList>
    </citation>
    <scope>PROTEIN SEQUENCE OF 10-17 AND 47-56</scope>
    <scope>TISSUE SPECIFICITY</scope>
    <source>
        <tissue evidence="1">Shell</tissue>
    </source>
</reference>
<proteinExistence type="evidence at protein level"/>
<sequence length="58" mass="6746">WFPCEYECRVDWGSNRRQLRTCTKECEQERASCMTGSSDPACSTNKANNQLHVQFKTL</sequence>
<keyword id="KW-0903">Direct protein sequencing</keyword>
<keyword id="KW-1185">Reference proteome</keyword>
<accession>P86787</accession>
<organism>
    <name type="scientific">Magallana gigas</name>
    <name type="common">Pacific oyster</name>
    <name type="synonym">Crassostrea gigas</name>
    <dbReference type="NCBI Taxonomy" id="29159"/>
    <lineage>
        <taxon>Eukaryota</taxon>
        <taxon>Metazoa</taxon>
        <taxon>Spiralia</taxon>
        <taxon>Lophotrochozoa</taxon>
        <taxon>Mollusca</taxon>
        <taxon>Bivalvia</taxon>
        <taxon>Autobranchia</taxon>
        <taxon>Pteriomorphia</taxon>
        <taxon>Ostreida</taxon>
        <taxon>Ostreoidea</taxon>
        <taxon>Ostreidae</taxon>
        <taxon>Magallana</taxon>
    </lineage>
</organism>
<evidence type="ECO:0000269" key="1">
    <source ref="2"/>
</evidence>
<evidence type="ECO:0000303" key="2">
    <source ref="2"/>
</evidence>
<evidence type="ECO:0000305" key="3"/>
<name>GIGA4_MAGGI</name>
<feature type="chain" id="PRO_0000403309" description="Gigasin-4">
    <location>
        <begin position="1" status="less than"/>
        <end position="58"/>
    </location>
</feature>
<feature type="non-terminal residue" evidence="3">
    <location>
        <position position="1"/>
    </location>
</feature>
<protein>
    <recommendedName>
        <fullName evidence="2">Gigasin-4</fullName>
    </recommendedName>
</protein>
<comment type="tissue specificity">
    <text evidence="1">Component of the organic matrix of calcified shell layers.</text>
</comment>